<gene>
    <name evidence="1" type="primary">rpsC</name>
    <name type="ordered locus">HD_1977</name>
</gene>
<reference key="1">
    <citation type="submission" date="2003-06" db="EMBL/GenBank/DDBJ databases">
        <title>The complete genome sequence of Haemophilus ducreyi.</title>
        <authorList>
            <person name="Munson R.S. Jr."/>
            <person name="Ray W.C."/>
            <person name="Mahairas G."/>
            <person name="Sabo P."/>
            <person name="Mungur R."/>
            <person name="Johnson L."/>
            <person name="Nguyen D."/>
            <person name="Wang J."/>
            <person name="Forst C."/>
            <person name="Hood L."/>
        </authorList>
    </citation>
    <scope>NUCLEOTIDE SEQUENCE [LARGE SCALE GENOMIC DNA]</scope>
    <source>
        <strain>35000HP / ATCC 700724</strain>
    </source>
</reference>
<dbReference type="EMBL" id="AE017143">
    <property type="protein sequence ID" value="AAP96694.1"/>
    <property type="molecule type" value="Genomic_DNA"/>
</dbReference>
<dbReference type="RefSeq" id="WP_010945716.1">
    <property type="nucleotide sequence ID" value="NC_002940.2"/>
</dbReference>
<dbReference type="SMR" id="Q7VKD7"/>
<dbReference type="STRING" id="233412.HD_1977"/>
<dbReference type="KEGG" id="hdu:HD_1977"/>
<dbReference type="eggNOG" id="COG0092">
    <property type="taxonomic scope" value="Bacteria"/>
</dbReference>
<dbReference type="HOGENOM" id="CLU_058591_0_2_6"/>
<dbReference type="OrthoDB" id="9806396at2"/>
<dbReference type="Proteomes" id="UP000001022">
    <property type="component" value="Chromosome"/>
</dbReference>
<dbReference type="GO" id="GO:0022627">
    <property type="term" value="C:cytosolic small ribosomal subunit"/>
    <property type="evidence" value="ECO:0007669"/>
    <property type="project" value="TreeGrafter"/>
</dbReference>
<dbReference type="GO" id="GO:0003729">
    <property type="term" value="F:mRNA binding"/>
    <property type="evidence" value="ECO:0007669"/>
    <property type="project" value="UniProtKB-UniRule"/>
</dbReference>
<dbReference type="GO" id="GO:0019843">
    <property type="term" value="F:rRNA binding"/>
    <property type="evidence" value="ECO:0007669"/>
    <property type="project" value="UniProtKB-UniRule"/>
</dbReference>
<dbReference type="GO" id="GO:0003735">
    <property type="term" value="F:structural constituent of ribosome"/>
    <property type="evidence" value="ECO:0007669"/>
    <property type="project" value="InterPro"/>
</dbReference>
<dbReference type="GO" id="GO:0006412">
    <property type="term" value="P:translation"/>
    <property type="evidence" value="ECO:0007669"/>
    <property type="project" value="UniProtKB-UniRule"/>
</dbReference>
<dbReference type="CDD" id="cd02412">
    <property type="entry name" value="KH-II_30S_S3"/>
    <property type="match status" value="1"/>
</dbReference>
<dbReference type="FunFam" id="3.30.1140.32:FF:000001">
    <property type="entry name" value="30S ribosomal protein S3"/>
    <property type="match status" value="1"/>
</dbReference>
<dbReference type="FunFam" id="3.30.300.20:FF:000001">
    <property type="entry name" value="30S ribosomal protein S3"/>
    <property type="match status" value="1"/>
</dbReference>
<dbReference type="Gene3D" id="3.30.300.20">
    <property type="match status" value="1"/>
</dbReference>
<dbReference type="Gene3D" id="3.30.1140.32">
    <property type="entry name" value="Ribosomal protein S3, C-terminal domain"/>
    <property type="match status" value="1"/>
</dbReference>
<dbReference type="HAMAP" id="MF_01309_B">
    <property type="entry name" value="Ribosomal_uS3_B"/>
    <property type="match status" value="1"/>
</dbReference>
<dbReference type="InterPro" id="IPR004087">
    <property type="entry name" value="KH_dom"/>
</dbReference>
<dbReference type="InterPro" id="IPR015946">
    <property type="entry name" value="KH_dom-like_a/b"/>
</dbReference>
<dbReference type="InterPro" id="IPR004044">
    <property type="entry name" value="KH_dom_type_2"/>
</dbReference>
<dbReference type="InterPro" id="IPR009019">
    <property type="entry name" value="KH_sf_prok-type"/>
</dbReference>
<dbReference type="InterPro" id="IPR036419">
    <property type="entry name" value="Ribosomal_S3_C_sf"/>
</dbReference>
<dbReference type="InterPro" id="IPR005704">
    <property type="entry name" value="Ribosomal_uS3_bac-typ"/>
</dbReference>
<dbReference type="InterPro" id="IPR001351">
    <property type="entry name" value="Ribosomal_uS3_C"/>
</dbReference>
<dbReference type="InterPro" id="IPR018280">
    <property type="entry name" value="Ribosomal_uS3_CS"/>
</dbReference>
<dbReference type="NCBIfam" id="TIGR01009">
    <property type="entry name" value="rpsC_bact"/>
    <property type="match status" value="1"/>
</dbReference>
<dbReference type="PANTHER" id="PTHR11760">
    <property type="entry name" value="30S/40S RIBOSOMAL PROTEIN S3"/>
    <property type="match status" value="1"/>
</dbReference>
<dbReference type="PANTHER" id="PTHR11760:SF19">
    <property type="entry name" value="SMALL RIBOSOMAL SUBUNIT PROTEIN US3C"/>
    <property type="match status" value="1"/>
</dbReference>
<dbReference type="Pfam" id="PF07650">
    <property type="entry name" value="KH_2"/>
    <property type="match status" value="1"/>
</dbReference>
<dbReference type="Pfam" id="PF00189">
    <property type="entry name" value="Ribosomal_S3_C"/>
    <property type="match status" value="1"/>
</dbReference>
<dbReference type="SMART" id="SM00322">
    <property type="entry name" value="KH"/>
    <property type="match status" value="1"/>
</dbReference>
<dbReference type="SUPFAM" id="SSF54814">
    <property type="entry name" value="Prokaryotic type KH domain (KH-domain type II)"/>
    <property type="match status" value="1"/>
</dbReference>
<dbReference type="SUPFAM" id="SSF54821">
    <property type="entry name" value="Ribosomal protein S3 C-terminal domain"/>
    <property type="match status" value="1"/>
</dbReference>
<dbReference type="PROSITE" id="PS50823">
    <property type="entry name" value="KH_TYPE_2"/>
    <property type="match status" value="1"/>
</dbReference>
<dbReference type="PROSITE" id="PS00548">
    <property type="entry name" value="RIBOSOMAL_S3"/>
    <property type="match status" value="1"/>
</dbReference>
<sequence>MGQKVHPNGIRLGIVKPWNSTWFANTQDFADNLDGDFKVRKFLNKELANASVSRIIIERPAKSIRVTIHTARPGIVIGKKGEDVEKLRNAVSQIAGVPAQINIAEVKKPELDAKLVADSIASQLERRVMFRRAMKRAVQNAMRLGAKGIKVEVSGRLGGAEIARSEWYREGRVPLHTLRADIDYNTAEAHTTYGVIGVKVWIFKGEILGGMAAVIESEQQPAAQPKKQARKGRK</sequence>
<proteinExistence type="inferred from homology"/>
<organism>
    <name type="scientific">Haemophilus ducreyi (strain 35000HP / ATCC 700724)</name>
    <dbReference type="NCBI Taxonomy" id="233412"/>
    <lineage>
        <taxon>Bacteria</taxon>
        <taxon>Pseudomonadati</taxon>
        <taxon>Pseudomonadota</taxon>
        <taxon>Gammaproteobacteria</taxon>
        <taxon>Pasteurellales</taxon>
        <taxon>Pasteurellaceae</taxon>
        <taxon>Haemophilus</taxon>
    </lineage>
</organism>
<name>RS3_HAEDU</name>
<protein>
    <recommendedName>
        <fullName evidence="1">Small ribosomal subunit protein uS3</fullName>
    </recommendedName>
    <alternativeName>
        <fullName evidence="2">30S ribosomal protein S3</fullName>
    </alternativeName>
</protein>
<feature type="chain" id="PRO_0000130127" description="Small ribosomal subunit protein uS3">
    <location>
        <begin position="1"/>
        <end position="234"/>
    </location>
</feature>
<feature type="domain" description="KH type-2" evidence="1">
    <location>
        <begin position="39"/>
        <end position="107"/>
    </location>
</feature>
<accession>Q7VKD7</accession>
<keyword id="KW-1185">Reference proteome</keyword>
<keyword id="KW-0687">Ribonucleoprotein</keyword>
<keyword id="KW-0689">Ribosomal protein</keyword>
<keyword id="KW-0694">RNA-binding</keyword>
<keyword id="KW-0699">rRNA-binding</keyword>
<evidence type="ECO:0000255" key="1">
    <source>
        <dbReference type="HAMAP-Rule" id="MF_01309"/>
    </source>
</evidence>
<evidence type="ECO:0000305" key="2"/>
<comment type="function">
    <text evidence="1">Binds the lower part of the 30S subunit head. Binds mRNA in the 70S ribosome, positioning it for translation.</text>
</comment>
<comment type="subunit">
    <text evidence="1">Part of the 30S ribosomal subunit. Forms a tight complex with proteins S10 and S14.</text>
</comment>
<comment type="similarity">
    <text evidence="1">Belongs to the universal ribosomal protein uS3 family.</text>
</comment>